<accession>P47166</accession>
<accession>D6VWV2</accession>
<feature type="initiator methionine" description="Removed" evidence="10">
    <location>
        <position position="1"/>
    </location>
</feature>
<feature type="chain" id="PRO_0000203121" description="Protein SGM1">
    <location>
        <begin position="2"/>
        <end position="707"/>
    </location>
</feature>
<feature type="region of interest" description="Disordered" evidence="2">
    <location>
        <begin position="1"/>
        <end position="52"/>
    </location>
</feature>
<feature type="coiled-coil region" evidence="1">
    <location>
        <begin position="122"/>
        <end position="473"/>
    </location>
</feature>
<feature type="coiled-coil region" evidence="1">
    <location>
        <begin position="594"/>
        <end position="706"/>
    </location>
</feature>
<feature type="compositionally biased region" description="Basic and acidic residues" evidence="2">
    <location>
        <begin position="1"/>
        <end position="11"/>
    </location>
</feature>
<feature type="compositionally biased region" description="Low complexity" evidence="2">
    <location>
        <begin position="27"/>
        <end position="40"/>
    </location>
</feature>
<feature type="modified residue" description="N-acetylserine" evidence="10">
    <location>
        <position position="2"/>
    </location>
</feature>
<feature type="modified residue" description="Phosphoserine" evidence="8">
    <location>
        <position position="151"/>
    </location>
</feature>
<feature type="modified residue" description="Phosphoserine" evidence="9">
    <location>
        <position position="538"/>
    </location>
</feature>
<feature type="modified residue" description="Phosphoserine" evidence="9">
    <location>
        <position position="549"/>
    </location>
</feature>
<feature type="modified residue" description="Phosphoserine" evidence="9">
    <location>
        <position position="568"/>
    </location>
</feature>
<feature type="modified residue" description="Phosphoserine" evidence="8 9">
    <location>
        <position position="571"/>
    </location>
</feature>
<feature type="modified residue" description="Phosphoserine" evidence="9">
    <location>
        <position position="576"/>
    </location>
</feature>
<feature type="modified residue" description="Phosphoserine" evidence="8">
    <location>
        <position position="589"/>
    </location>
</feature>
<keyword id="KW-0007">Acetylation</keyword>
<keyword id="KW-0175">Coiled coil</keyword>
<keyword id="KW-0333">Golgi apparatus</keyword>
<keyword id="KW-0597">Phosphoprotein</keyword>
<keyword id="KW-1185">Reference proteome</keyword>
<evidence type="ECO:0000255" key="1"/>
<evidence type="ECO:0000256" key="2">
    <source>
        <dbReference type="SAM" id="MobiDB-lite"/>
    </source>
</evidence>
<evidence type="ECO:0000269" key="3">
    <source>
    </source>
</evidence>
<evidence type="ECO:0000269" key="4">
    <source>
    </source>
</evidence>
<evidence type="ECO:0000269" key="5">
    <source>
    </source>
</evidence>
<evidence type="ECO:0000269" key="6">
    <source>
    </source>
</evidence>
<evidence type="ECO:0000305" key="7"/>
<evidence type="ECO:0007744" key="8">
    <source>
    </source>
</evidence>
<evidence type="ECO:0007744" key="9">
    <source>
    </source>
</evidence>
<evidence type="ECO:0007744" key="10">
    <source>
    </source>
</evidence>
<sequence>MSKKLSLEERLSLATKKGRKKNKRSTSNLSSPSPVVLSNNEQESARTSIDDAAAGVVSIDNAENIDDPAVRSESTVEGDTGKADSIAVDDVVHPDHNRTDCFDDTMVSLPTWLPKNYTEFTVEELVKEISPEYLRLNKQIDDLTNELNRKSQIETTDSSFFKLIKEKDDLIDQLRKEGAKLAETELRQSNQIKALRTKVKDLEYEVSELNDSSAQSVENYNELQSLYHNIQGQLAEATNKLKDADKQKESLETLEKNIKEKDDLITILQQSLDNMRTLLEKEKSEFQTEKKALQEATVDQVTTLETKLEQLRIELDSSTQNLDAKSNRDFVDDQQSYEEKQHASFQYNRLKEQLESSKANWDSIEYALNTKIVNLENRFESTMKEKNDIEEKYQTALRSSETLGKQLEKEKENHSKAVLEVKDLERRAETLKSSLQSISDDYNLLKKKYEIQRSQLEQKENELKPHQENSNEKIIDKIPVELTDSLNSMEGNIEDEWTLPQENSMLSLSMSKLGELESDPSLKPIYNESHETICSEESQHFDRKNVDFSIDDIPEEAAALQAIREGESMNSLNNTSIPYRRASVQLSNSNGHISAHLVNKLSTELKRLEGELSASKELYDNLLKEKTKANDEILRLLEENDKFNEVNKQKDDLLKRVEQMQSKLETSLQLLGEKTEQVEELENDVSDLKEMMHQQVQQMVEMQGKMR</sequence>
<reference key="1">
    <citation type="journal article" date="1996" name="EMBO J.">
        <title>Complete nucleotide sequence of Saccharomyces cerevisiae chromosome X.</title>
        <authorList>
            <person name="Galibert F."/>
            <person name="Alexandraki D."/>
            <person name="Baur A."/>
            <person name="Boles E."/>
            <person name="Chalwatzis N."/>
            <person name="Chuat J.-C."/>
            <person name="Coster F."/>
            <person name="Cziepluch C."/>
            <person name="de Haan M."/>
            <person name="Domdey H."/>
            <person name="Durand P."/>
            <person name="Entian K.-D."/>
            <person name="Gatius M."/>
            <person name="Goffeau A."/>
            <person name="Grivell L.A."/>
            <person name="Hennemann A."/>
            <person name="Herbert C.J."/>
            <person name="Heumann K."/>
            <person name="Hilger F."/>
            <person name="Hollenberg C.P."/>
            <person name="Huang M.-E."/>
            <person name="Jacq C."/>
            <person name="Jauniaux J.-C."/>
            <person name="Katsoulou C."/>
            <person name="Kirchrath L."/>
            <person name="Kleine K."/>
            <person name="Kordes E."/>
            <person name="Koetter P."/>
            <person name="Liebl S."/>
            <person name="Louis E.J."/>
            <person name="Manus V."/>
            <person name="Mewes H.-W."/>
            <person name="Miosga T."/>
            <person name="Obermaier B."/>
            <person name="Perea J."/>
            <person name="Pohl T.M."/>
            <person name="Portetelle D."/>
            <person name="Pujol A."/>
            <person name="Purnelle B."/>
            <person name="Ramezani Rad M."/>
            <person name="Rasmussen S.W."/>
            <person name="Rose M."/>
            <person name="Rossau R."/>
            <person name="Schaaff-Gerstenschlaeger I."/>
            <person name="Smits P.H.M."/>
            <person name="Scarcez T."/>
            <person name="Soriano N."/>
            <person name="To Van D."/>
            <person name="Tzermia M."/>
            <person name="Van Broekhoven A."/>
            <person name="Vandenbol M."/>
            <person name="Wedler H."/>
            <person name="von Wettstein D."/>
            <person name="Wambutt R."/>
            <person name="Zagulski M."/>
            <person name="Zollner A."/>
            <person name="Karpfinger-Hartl L."/>
        </authorList>
    </citation>
    <scope>NUCLEOTIDE SEQUENCE [LARGE SCALE GENOMIC DNA]</scope>
    <source>
        <strain>ATCC 204508 / S288c</strain>
    </source>
</reference>
<reference key="2">
    <citation type="journal article" date="2014" name="G3 (Bethesda)">
        <title>The reference genome sequence of Saccharomyces cerevisiae: Then and now.</title>
        <authorList>
            <person name="Engel S.R."/>
            <person name="Dietrich F.S."/>
            <person name="Fisk D.G."/>
            <person name="Binkley G."/>
            <person name="Balakrishnan R."/>
            <person name="Costanzo M.C."/>
            <person name="Dwight S.S."/>
            <person name="Hitz B.C."/>
            <person name="Karra K."/>
            <person name="Nash R.S."/>
            <person name="Weng S."/>
            <person name="Wong E.D."/>
            <person name="Lloyd P."/>
            <person name="Skrzypek M.S."/>
            <person name="Miyasato S.R."/>
            <person name="Simison M."/>
            <person name="Cherry J.M."/>
        </authorList>
    </citation>
    <scope>GENOME REANNOTATION</scope>
    <source>
        <strain>ATCC 204508 / S288c</strain>
    </source>
</reference>
<reference key="3">
    <citation type="journal article" date="1999" name="Mol. Gen. Genet.">
        <title>Functional analysis of 150 deletion mutants in Saccharomyces cerevisiae by a systematic approach.</title>
        <authorList>
            <person name="Entian K.-D."/>
            <person name="Schuster T."/>
            <person name="Hegemann J.H."/>
            <person name="Becher D."/>
            <person name="Feldmann H."/>
            <person name="Gueldener U."/>
            <person name="Goetz R."/>
            <person name="Hansen M."/>
            <person name="Hollenberg C.P."/>
            <person name="Jansen G."/>
            <person name="Kramer W."/>
            <person name="Klein S."/>
            <person name="Koetter P."/>
            <person name="Kricke J."/>
            <person name="Launhardt H."/>
            <person name="Mannhaupt G."/>
            <person name="Maierl A."/>
            <person name="Meyer P."/>
            <person name="Mewes W."/>
            <person name="Munder T."/>
            <person name="Niedenthal R.K."/>
            <person name="Ramezani Rad M."/>
            <person name="Roehmer A."/>
            <person name="Roemer A."/>
            <person name="Rose M."/>
            <person name="Schaefer B."/>
            <person name="Siegler M.-L."/>
            <person name="Vetter J."/>
            <person name="Wilhelm N."/>
            <person name="Wolf K."/>
            <person name="Zimmermann F.K."/>
            <person name="Zollner A."/>
            <person name="Hinnen A."/>
        </authorList>
    </citation>
    <scope>FUNCTION</scope>
</reference>
<reference key="4">
    <citation type="journal article" date="2003" name="Nature">
        <title>Global analysis of protein localization in budding yeast.</title>
        <authorList>
            <person name="Huh W.-K."/>
            <person name="Falvo J.V."/>
            <person name="Gerke L.C."/>
            <person name="Carroll A.S."/>
            <person name="Howson R.W."/>
            <person name="Weissman J.S."/>
            <person name="O'Shea E.K."/>
        </authorList>
    </citation>
    <scope>SUBCELLULAR LOCATION [LARGE SCALE ANALYSIS]</scope>
</reference>
<reference key="5">
    <citation type="journal article" date="2003" name="Nature">
        <title>Global analysis of protein expression in yeast.</title>
        <authorList>
            <person name="Ghaemmaghami S."/>
            <person name="Huh W.-K."/>
            <person name="Bower K."/>
            <person name="Howson R.W."/>
            <person name="Belle A."/>
            <person name="Dephoure N."/>
            <person name="O'Shea E.K."/>
            <person name="Weissman J.S."/>
        </authorList>
    </citation>
    <scope>LEVEL OF PROTEIN EXPRESSION [LARGE SCALE ANALYSIS]</scope>
</reference>
<reference key="6">
    <citation type="journal article" date="2005" name="Methods Enzymol.">
        <title>Affinity purification of Ypt6 effectors and identification of TMF/ARA160 as a Rab6 interactor.</title>
        <authorList>
            <person name="Siniossoglou S."/>
        </authorList>
    </citation>
    <scope>INTERACTION WITH YPT6</scope>
</reference>
<reference key="7">
    <citation type="journal article" date="2007" name="J. Proteome Res.">
        <title>Large-scale phosphorylation analysis of alpha-factor-arrested Saccharomyces cerevisiae.</title>
        <authorList>
            <person name="Li X."/>
            <person name="Gerber S.A."/>
            <person name="Rudner A.D."/>
            <person name="Beausoleil S.A."/>
            <person name="Haas W."/>
            <person name="Villen J."/>
            <person name="Elias J.E."/>
            <person name="Gygi S.P."/>
        </authorList>
    </citation>
    <scope>IDENTIFICATION BY MASS SPECTROMETRY [LARGE SCALE ANALYSIS]</scope>
    <source>
        <strain>ADR376</strain>
    </source>
</reference>
<reference key="8">
    <citation type="journal article" date="2008" name="Mol. Cell. Proteomics">
        <title>A multidimensional chromatography technology for in-depth phosphoproteome analysis.</title>
        <authorList>
            <person name="Albuquerque C.P."/>
            <person name="Smolka M.B."/>
            <person name="Payne S.H."/>
            <person name="Bafna V."/>
            <person name="Eng J."/>
            <person name="Zhou H."/>
        </authorList>
    </citation>
    <scope>PHOSPHORYLATION [LARGE SCALE ANALYSIS] AT SER-151; SER-571 AND SER-589</scope>
    <scope>IDENTIFICATION BY MASS SPECTROMETRY [LARGE SCALE ANALYSIS]</scope>
</reference>
<reference key="9">
    <citation type="journal article" date="2009" name="Science">
        <title>Global analysis of Cdk1 substrate phosphorylation sites provides insights into evolution.</title>
        <authorList>
            <person name="Holt L.J."/>
            <person name="Tuch B.B."/>
            <person name="Villen J."/>
            <person name="Johnson A.D."/>
            <person name="Gygi S.P."/>
            <person name="Morgan D.O."/>
        </authorList>
    </citation>
    <scope>PHOSPHORYLATION [LARGE SCALE ANALYSIS] AT SER-538; SER-549; SER-568; SER-571 AND SER-576</scope>
    <scope>IDENTIFICATION BY MASS SPECTROMETRY [LARGE SCALE ANALYSIS]</scope>
</reference>
<reference key="10">
    <citation type="journal article" date="2012" name="Proc. Natl. Acad. Sci. U.S.A.">
        <title>N-terminal acetylome analyses and functional insights of the N-terminal acetyltransferase NatB.</title>
        <authorList>
            <person name="Van Damme P."/>
            <person name="Lasa M."/>
            <person name="Polevoda B."/>
            <person name="Gazquez C."/>
            <person name="Elosegui-Artola A."/>
            <person name="Kim D.S."/>
            <person name="De Juan-Pardo E."/>
            <person name="Demeyer K."/>
            <person name="Hole K."/>
            <person name="Larrea E."/>
            <person name="Timmerman E."/>
            <person name="Prieto J."/>
            <person name="Arnesen T."/>
            <person name="Sherman F."/>
            <person name="Gevaert K."/>
            <person name="Aldabe R."/>
        </authorList>
    </citation>
    <scope>ACETYLATION [LARGE SCALE ANALYSIS] AT SER-2</scope>
    <scope>CLEAVAGE OF INITIATOR METHIONINE [LARGE SCALE ANALYSIS]</scope>
    <scope>IDENTIFICATION BY MASS SPECTROMETRY [LARGE SCALE ANALYSIS]</scope>
</reference>
<name>SGM1_YEAST</name>
<proteinExistence type="evidence at protein level"/>
<protein>
    <recommendedName>
        <fullName>Protein SGM1</fullName>
    </recommendedName>
    <alternativeName>
        <fullName>Slow growth on galactose and mannose protein 1</fullName>
    </alternativeName>
</protein>
<comment type="function">
    <text evidence="3">Required for normal growth rate on galactose and mannose.</text>
</comment>
<comment type="subunit">
    <text evidence="6">Interacts with YPT6.</text>
</comment>
<comment type="subcellular location">
    <subcellularLocation>
        <location evidence="4">Golgi apparatus</location>
    </subcellularLocation>
</comment>
<comment type="miscellaneous">
    <text evidence="5">Present with 300 molecules/cell in log phase SD medium.</text>
</comment>
<comment type="similarity">
    <text evidence="7">Belongs to the SGM1 family.</text>
</comment>
<organism>
    <name type="scientific">Saccharomyces cerevisiae (strain ATCC 204508 / S288c)</name>
    <name type="common">Baker's yeast</name>
    <dbReference type="NCBI Taxonomy" id="559292"/>
    <lineage>
        <taxon>Eukaryota</taxon>
        <taxon>Fungi</taxon>
        <taxon>Dikarya</taxon>
        <taxon>Ascomycota</taxon>
        <taxon>Saccharomycotina</taxon>
        <taxon>Saccharomycetes</taxon>
        <taxon>Saccharomycetales</taxon>
        <taxon>Saccharomycetaceae</taxon>
        <taxon>Saccharomyces</taxon>
    </lineage>
</organism>
<gene>
    <name type="primary">SGM1</name>
    <name type="ordered locus">YJR134C</name>
    <name type="ORF">J2120</name>
</gene>
<dbReference type="EMBL" id="Z49634">
    <property type="protein sequence ID" value="CAA89665.1"/>
    <property type="molecule type" value="Genomic_DNA"/>
</dbReference>
<dbReference type="EMBL" id="Z49635">
    <property type="protein sequence ID" value="CAA89667.1"/>
    <property type="molecule type" value="Genomic_DNA"/>
</dbReference>
<dbReference type="EMBL" id="BK006943">
    <property type="protein sequence ID" value="DAA08918.1"/>
    <property type="molecule type" value="Genomic_DNA"/>
</dbReference>
<dbReference type="PIR" id="S57157">
    <property type="entry name" value="S57157"/>
</dbReference>
<dbReference type="RefSeq" id="NP_012668.3">
    <property type="nucleotide sequence ID" value="NM_001181792.3"/>
</dbReference>
<dbReference type="SMR" id="P47166"/>
<dbReference type="BioGRID" id="33889">
    <property type="interactions" value="100"/>
</dbReference>
<dbReference type="DIP" id="DIP-2973N"/>
<dbReference type="FunCoup" id="P47166">
    <property type="interactions" value="599"/>
</dbReference>
<dbReference type="IntAct" id="P47166">
    <property type="interactions" value="4"/>
</dbReference>
<dbReference type="MINT" id="P47166"/>
<dbReference type="STRING" id="4932.YJR134C"/>
<dbReference type="iPTMnet" id="P47166"/>
<dbReference type="PaxDb" id="4932-YJR134C"/>
<dbReference type="PeptideAtlas" id="P47166"/>
<dbReference type="EnsemblFungi" id="YJR134C_mRNA">
    <property type="protein sequence ID" value="YJR134C"/>
    <property type="gene ID" value="YJR134C"/>
</dbReference>
<dbReference type="GeneID" id="853598"/>
<dbReference type="KEGG" id="sce:YJR134C"/>
<dbReference type="AGR" id="SGD:S000003895"/>
<dbReference type="SGD" id="S000003895">
    <property type="gene designation" value="SGM1"/>
</dbReference>
<dbReference type="VEuPathDB" id="FungiDB:YJR134C"/>
<dbReference type="eggNOG" id="KOG4673">
    <property type="taxonomic scope" value="Eukaryota"/>
</dbReference>
<dbReference type="HOGENOM" id="CLU_018551_0_0_1"/>
<dbReference type="InParanoid" id="P47166"/>
<dbReference type="OMA" id="NWESIEF"/>
<dbReference type="OrthoDB" id="74178at2759"/>
<dbReference type="BioCyc" id="YEAST:G3O-31751-MONOMER"/>
<dbReference type="Reactome" id="R-SCE-6811440">
    <property type="pathway name" value="Retrograde transport at the Trans-Golgi-Network"/>
</dbReference>
<dbReference type="BioGRID-ORCS" id="853598">
    <property type="hits" value="7 hits in 10 CRISPR screens"/>
</dbReference>
<dbReference type="PRO" id="PR:P47166"/>
<dbReference type="Proteomes" id="UP000002311">
    <property type="component" value="Chromosome X"/>
</dbReference>
<dbReference type="RNAct" id="P47166">
    <property type="molecule type" value="protein"/>
</dbReference>
<dbReference type="GO" id="GO:0005783">
    <property type="term" value="C:endoplasmic reticulum"/>
    <property type="evidence" value="ECO:0000318"/>
    <property type="project" value="GO_Central"/>
</dbReference>
<dbReference type="GO" id="GO:0005794">
    <property type="term" value="C:Golgi apparatus"/>
    <property type="evidence" value="ECO:0007005"/>
    <property type="project" value="SGD"/>
</dbReference>
<dbReference type="GO" id="GO:0031267">
    <property type="term" value="F:small GTPase binding"/>
    <property type="evidence" value="ECO:0000353"/>
    <property type="project" value="FlyBase"/>
</dbReference>
<dbReference type="InterPro" id="IPR052602">
    <property type="entry name" value="Growth_transcription_reg"/>
</dbReference>
<dbReference type="InterPro" id="IPR022092">
    <property type="entry name" value="TMF_DNA-bd"/>
</dbReference>
<dbReference type="InterPro" id="IPR022091">
    <property type="entry name" value="TMF_TATA-bd"/>
</dbReference>
<dbReference type="PANTHER" id="PTHR46515:SF1">
    <property type="entry name" value="TATA ELEMENT MODULATORY FACTOR"/>
    <property type="match status" value="1"/>
</dbReference>
<dbReference type="PANTHER" id="PTHR46515">
    <property type="entry name" value="TATA ELEMENT MODULATORY FACTOR TMF1"/>
    <property type="match status" value="1"/>
</dbReference>
<dbReference type="Pfam" id="PF12329">
    <property type="entry name" value="TMF_DNA_bd"/>
    <property type="match status" value="1"/>
</dbReference>
<dbReference type="Pfam" id="PF12325">
    <property type="entry name" value="TMF_TATA_bd"/>
    <property type="match status" value="1"/>
</dbReference>